<dbReference type="EC" id="2.7.11.18"/>
<dbReference type="EMBL" id="AL833801">
    <property type="status" value="NOT_ANNOTATED_CDS"/>
    <property type="molecule type" value="Genomic_DNA"/>
</dbReference>
<dbReference type="EMBL" id="AK079396">
    <property type="status" value="NOT_ANNOTATED_CDS"/>
    <property type="molecule type" value="mRNA"/>
</dbReference>
<dbReference type="EMBL" id="BC019408">
    <property type="protein sequence ID" value="AAH19408.1"/>
    <property type="molecule type" value="mRNA"/>
</dbReference>
<dbReference type="CCDS" id="CCDS38282.2"/>
<dbReference type="RefSeq" id="NP_001074513.2">
    <property type="nucleotide sequence ID" value="NM_001081044.2"/>
</dbReference>
<dbReference type="BMRB" id="Q8VCR8"/>
<dbReference type="SMR" id="Q8VCR8"/>
<dbReference type="FunCoup" id="Q8VCR8">
    <property type="interactions" value="831"/>
</dbReference>
<dbReference type="IntAct" id="Q8VCR8">
    <property type="interactions" value="2"/>
</dbReference>
<dbReference type="MINT" id="Q8VCR8"/>
<dbReference type="STRING" id="10090.ENSMUSP00000028970"/>
<dbReference type="iPTMnet" id="Q8VCR8"/>
<dbReference type="PhosphoSitePlus" id="Q8VCR8"/>
<dbReference type="jPOST" id="Q8VCR8"/>
<dbReference type="PaxDb" id="10090-ENSMUSP00000028970"/>
<dbReference type="ProteomicsDB" id="287572"/>
<dbReference type="Antibodypedia" id="25246">
    <property type="antibodies" value="151 antibodies from 26 providers"/>
</dbReference>
<dbReference type="DNASU" id="228785"/>
<dbReference type="Ensembl" id="ENSMUST00000028970.8">
    <property type="protein sequence ID" value="ENSMUSP00000028970.8"/>
    <property type="gene ID" value="ENSMUSG00000027470.10"/>
</dbReference>
<dbReference type="GeneID" id="228785"/>
<dbReference type="KEGG" id="mmu:228785"/>
<dbReference type="UCSC" id="uc008ngs.2">
    <property type="organism name" value="mouse"/>
</dbReference>
<dbReference type="AGR" id="MGI:2139434"/>
<dbReference type="CTD" id="85366"/>
<dbReference type="MGI" id="MGI:2139434">
    <property type="gene designation" value="Mylk2"/>
</dbReference>
<dbReference type="VEuPathDB" id="HostDB:ENSMUSG00000027470"/>
<dbReference type="eggNOG" id="KOG0032">
    <property type="taxonomic scope" value="Eukaryota"/>
</dbReference>
<dbReference type="GeneTree" id="ENSGT00940000161489"/>
<dbReference type="HOGENOM" id="CLU_000288_90_1_1"/>
<dbReference type="InParanoid" id="Q8VCR8"/>
<dbReference type="OMA" id="VVMAVWF"/>
<dbReference type="OrthoDB" id="6070751at2759"/>
<dbReference type="PhylomeDB" id="Q8VCR8"/>
<dbReference type="TreeFam" id="TF314166"/>
<dbReference type="BioGRID-ORCS" id="228785">
    <property type="hits" value="3 hits in 80 CRISPR screens"/>
</dbReference>
<dbReference type="ChiTaRS" id="Mylk2">
    <property type="organism name" value="mouse"/>
</dbReference>
<dbReference type="PRO" id="PR:Q8VCR8"/>
<dbReference type="Proteomes" id="UP000000589">
    <property type="component" value="Chromosome 2"/>
</dbReference>
<dbReference type="RNAct" id="Q8VCR8">
    <property type="molecule type" value="protein"/>
</dbReference>
<dbReference type="Bgee" id="ENSMUSG00000027470">
    <property type="expression patterns" value="Expressed in hindlimb stylopod muscle and 50 other cell types or tissues"/>
</dbReference>
<dbReference type="GO" id="GO:0005737">
    <property type="term" value="C:cytoplasm"/>
    <property type="evidence" value="ECO:0007669"/>
    <property type="project" value="UniProtKB-SubCell"/>
</dbReference>
<dbReference type="GO" id="GO:0005634">
    <property type="term" value="C:nucleus"/>
    <property type="evidence" value="ECO:0007669"/>
    <property type="project" value="Ensembl"/>
</dbReference>
<dbReference type="GO" id="GO:0045202">
    <property type="term" value="C:synapse"/>
    <property type="evidence" value="ECO:0007669"/>
    <property type="project" value="GOC"/>
</dbReference>
<dbReference type="GO" id="GO:0005524">
    <property type="term" value="F:ATP binding"/>
    <property type="evidence" value="ECO:0007669"/>
    <property type="project" value="UniProtKB-KW"/>
</dbReference>
<dbReference type="GO" id="GO:0005516">
    <property type="term" value="F:calmodulin binding"/>
    <property type="evidence" value="ECO:0007669"/>
    <property type="project" value="UniProtKB-KW"/>
</dbReference>
<dbReference type="GO" id="GO:0004687">
    <property type="term" value="F:myosin light chain kinase activity"/>
    <property type="evidence" value="ECO:0007669"/>
    <property type="project" value="UniProtKB-EC"/>
</dbReference>
<dbReference type="GO" id="GO:0055007">
    <property type="term" value="P:cardiac muscle cell differentiation"/>
    <property type="evidence" value="ECO:0000303"/>
    <property type="project" value="UniProtKB"/>
</dbReference>
<dbReference type="GO" id="GO:0055008">
    <property type="term" value="P:cardiac muscle tissue morphogenesis"/>
    <property type="evidence" value="ECO:0007669"/>
    <property type="project" value="Ensembl"/>
</dbReference>
<dbReference type="GO" id="GO:0007274">
    <property type="term" value="P:neuromuscular synaptic transmission"/>
    <property type="evidence" value="ECO:0000315"/>
    <property type="project" value="MGI"/>
</dbReference>
<dbReference type="GO" id="GO:0010628">
    <property type="term" value="P:positive regulation of gene expression"/>
    <property type="evidence" value="ECO:0007669"/>
    <property type="project" value="Ensembl"/>
</dbReference>
<dbReference type="GO" id="GO:0032971">
    <property type="term" value="P:regulation of muscle filament sliding"/>
    <property type="evidence" value="ECO:0007669"/>
    <property type="project" value="Ensembl"/>
</dbReference>
<dbReference type="GO" id="GO:0035914">
    <property type="term" value="P:skeletal muscle cell differentiation"/>
    <property type="evidence" value="ECO:0000303"/>
    <property type="project" value="UniProtKB"/>
</dbReference>
<dbReference type="GO" id="GO:0014816">
    <property type="term" value="P:skeletal muscle satellite cell differentiation"/>
    <property type="evidence" value="ECO:0000315"/>
    <property type="project" value="UniProtKB"/>
</dbReference>
<dbReference type="GO" id="GO:0006941">
    <property type="term" value="P:striated muscle contraction"/>
    <property type="evidence" value="ECO:0007669"/>
    <property type="project" value="Ensembl"/>
</dbReference>
<dbReference type="CDD" id="cd14190">
    <property type="entry name" value="STKc_MLCK2"/>
    <property type="match status" value="1"/>
</dbReference>
<dbReference type="FunFam" id="3.30.200.20:FF:000359">
    <property type="entry name" value="myosin light chain kinase 2, skeletal/cardiac muscle"/>
    <property type="match status" value="1"/>
</dbReference>
<dbReference type="FunFam" id="1.10.510.10:FF:000135">
    <property type="entry name" value="Putative myosin light chain kinase 3"/>
    <property type="match status" value="1"/>
</dbReference>
<dbReference type="Gene3D" id="3.30.200.20">
    <property type="entry name" value="Phosphorylase Kinase, domain 1"/>
    <property type="match status" value="1"/>
</dbReference>
<dbReference type="Gene3D" id="1.10.510.10">
    <property type="entry name" value="Transferase(Phosphotransferase) domain 1"/>
    <property type="match status" value="1"/>
</dbReference>
<dbReference type="InterPro" id="IPR011009">
    <property type="entry name" value="Kinase-like_dom_sf"/>
</dbReference>
<dbReference type="InterPro" id="IPR042717">
    <property type="entry name" value="MLCK2_STKc"/>
</dbReference>
<dbReference type="InterPro" id="IPR000719">
    <property type="entry name" value="Prot_kinase_dom"/>
</dbReference>
<dbReference type="InterPro" id="IPR017441">
    <property type="entry name" value="Protein_kinase_ATP_BS"/>
</dbReference>
<dbReference type="InterPro" id="IPR008271">
    <property type="entry name" value="Ser/Thr_kinase_AS"/>
</dbReference>
<dbReference type="PANTHER" id="PTHR24347">
    <property type="entry name" value="SERINE/THREONINE-PROTEIN KINASE"/>
    <property type="match status" value="1"/>
</dbReference>
<dbReference type="Pfam" id="PF00069">
    <property type="entry name" value="Pkinase"/>
    <property type="match status" value="1"/>
</dbReference>
<dbReference type="SMART" id="SM00220">
    <property type="entry name" value="S_TKc"/>
    <property type="match status" value="1"/>
</dbReference>
<dbReference type="SUPFAM" id="SSF56112">
    <property type="entry name" value="Protein kinase-like (PK-like)"/>
    <property type="match status" value="1"/>
</dbReference>
<dbReference type="PROSITE" id="PS00107">
    <property type="entry name" value="PROTEIN_KINASE_ATP"/>
    <property type="match status" value="1"/>
</dbReference>
<dbReference type="PROSITE" id="PS50011">
    <property type="entry name" value="PROTEIN_KINASE_DOM"/>
    <property type="match status" value="1"/>
</dbReference>
<dbReference type="PROSITE" id="PS00108">
    <property type="entry name" value="PROTEIN_KINASE_ST"/>
    <property type="match status" value="1"/>
</dbReference>
<organism>
    <name type="scientific">Mus musculus</name>
    <name type="common">Mouse</name>
    <dbReference type="NCBI Taxonomy" id="10090"/>
    <lineage>
        <taxon>Eukaryota</taxon>
        <taxon>Metazoa</taxon>
        <taxon>Chordata</taxon>
        <taxon>Craniata</taxon>
        <taxon>Vertebrata</taxon>
        <taxon>Euteleostomi</taxon>
        <taxon>Mammalia</taxon>
        <taxon>Eutheria</taxon>
        <taxon>Euarchontoglires</taxon>
        <taxon>Glires</taxon>
        <taxon>Rodentia</taxon>
        <taxon>Myomorpha</taxon>
        <taxon>Muroidea</taxon>
        <taxon>Muridae</taxon>
        <taxon>Murinae</taxon>
        <taxon>Mus</taxon>
        <taxon>Mus</taxon>
    </lineage>
</organism>
<comment type="function">
    <text evidence="1">Implicated in the level of global muscle contraction and cardiac function. Phosphorylates a specific serine in the N-terminus of a myosin light chain (By similarity).</text>
</comment>
<comment type="catalytic activity">
    <reaction>
        <text>L-seryl-[myosin light chain] + ATP = O-phospho-L-seryl-[myosin light chain] + ADP + H(+)</text>
        <dbReference type="Rhea" id="RHEA:22004"/>
        <dbReference type="Rhea" id="RHEA-COMP:13684"/>
        <dbReference type="Rhea" id="RHEA-COMP:13685"/>
        <dbReference type="ChEBI" id="CHEBI:15378"/>
        <dbReference type="ChEBI" id="CHEBI:29999"/>
        <dbReference type="ChEBI" id="CHEBI:30616"/>
        <dbReference type="ChEBI" id="CHEBI:83421"/>
        <dbReference type="ChEBI" id="CHEBI:456216"/>
        <dbReference type="EC" id="2.7.11.18"/>
    </reaction>
</comment>
<comment type="catalytic activity">
    <reaction>
        <text>L-threonyl-[myosin light chain] + ATP = O-phospho-L-threonyl-[myosin light chain] + ADP + H(+)</text>
        <dbReference type="Rhea" id="RHEA:53900"/>
        <dbReference type="Rhea" id="RHEA-COMP:13686"/>
        <dbReference type="Rhea" id="RHEA-COMP:13687"/>
        <dbReference type="ChEBI" id="CHEBI:15378"/>
        <dbReference type="ChEBI" id="CHEBI:30013"/>
        <dbReference type="ChEBI" id="CHEBI:30616"/>
        <dbReference type="ChEBI" id="CHEBI:61977"/>
        <dbReference type="ChEBI" id="CHEBI:456216"/>
        <dbReference type="EC" id="2.7.11.18"/>
    </reaction>
</comment>
<comment type="subunit">
    <text evidence="1">May interact with centrin.</text>
</comment>
<comment type="subcellular location">
    <subcellularLocation>
        <location evidence="1">Cytoplasm</location>
    </subcellularLocation>
    <text evidence="1">Colocalizes with phosphorylated myosin light chain (RLCP) at filaments of the myofibrils.</text>
</comment>
<comment type="similarity">
    <text evidence="6">Belongs to the protein kinase superfamily. CAMK Ser/Thr protein kinase family.</text>
</comment>
<accession>Q8VCR8</accession>
<accession>A2APB9</accession>
<protein>
    <recommendedName>
        <fullName>Myosin light chain kinase 2, skeletal/cardiac muscle</fullName>
        <shortName>MLCK2</shortName>
        <ecNumber>2.7.11.18</ecNumber>
    </recommendedName>
</protein>
<name>MYLK2_MOUSE</name>
<gene>
    <name type="primary">Mylk2</name>
</gene>
<reference key="1">
    <citation type="journal article" date="2009" name="PLoS Biol.">
        <title>Lineage-specific biology revealed by a finished genome assembly of the mouse.</title>
        <authorList>
            <person name="Church D.M."/>
            <person name="Goodstadt L."/>
            <person name="Hillier L.W."/>
            <person name="Zody M.C."/>
            <person name="Goldstein S."/>
            <person name="She X."/>
            <person name="Bult C.J."/>
            <person name="Agarwala R."/>
            <person name="Cherry J.L."/>
            <person name="DiCuccio M."/>
            <person name="Hlavina W."/>
            <person name="Kapustin Y."/>
            <person name="Meric P."/>
            <person name="Maglott D."/>
            <person name="Birtle Z."/>
            <person name="Marques A.C."/>
            <person name="Graves T."/>
            <person name="Zhou S."/>
            <person name="Teague B."/>
            <person name="Potamousis K."/>
            <person name="Churas C."/>
            <person name="Place M."/>
            <person name="Herschleb J."/>
            <person name="Runnheim R."/>
            <person name="Forrest D."/>
            <person name="Amos-Landgraf J."/>
            <person name="Schwartz D.C."/>
            <person name="Cheng Z."/>
            <person name="Lindblad-Toh K."/>
            <person name="Eichler E.E."/>
            <person name="Ponting C.P."/>
        </authorList>
    </citation>
    <scope>NUCLEOTIDE SEQUENCE [LARGE SCALE GENOMIC DNA]</scope>
    <source>
        <strain>C57BL/6J</strain>
    </source>
</reference>
<reference key="2">
    <citation type="journal article" date="2005" name="Science">
        <title>The transcriptional landscape of the mammalian genome.</title>
        <authorList>
            <person name="Carninci P."/>
            <person name="Kasukawa T."/>
            <person name="Katayama S."/>
            <person name="Gough J."/>
            <person name="Frith M.C."/>
            <person name="Maeda N."/>
            <person name="Oyama R."/>
            <person name="Ravasi T."/>
            <person name="Lenhard B."/>
            <person name="Wells C."/>
            <person name="Kodzius R."/>
            <person name="Shimokawa K."/>
            <person name="Bajic V.B."/>
            <person name="Brenner S.E."/>
            <person name="Batalov S."/>
            <person name="Forrest A.R."/>
            <person name="Zavolan M."/>
            <person name="Davis M.J."/>
            <person name="Wilming L.G."/>
            <person name="Aidinis V."/>
            <person name="Allen J.E."/>
            <person name="Ambesi-Impiombato A."/>
            <person name="Apweiler R."/>
            <person name="Aturaliya R.N."/>
            <person name="Bailey T.L."/>
            <person name="Bansal M."/>
            <person name="Baxter L."/>
            <person name="Beisel K.W."/>
            <person name="Bersano T."/>
            <person name="Bono H."/>
            <person name="Chalk A.M."/>
            <person name="Chiu K.P."/>
            <person name="Choudhary V."/>
            <person name="Christoffels A."/>
            <person name="Clutterbuck D.R."/>
            <person name="Crowe M.L."/>
            <person name="Dalla E."/>
            <person name="Dalrymple B.P."/>
            <person name="de Bono B."/>
            <person name="Della Gatta G."/>
            <person name="di Bernardo D."/>
            <person name="Down T."/>
            <person name="Engstrom P."/>
            <person name="Fagiolini M."/>
            <person name="Faulkner G."/>
            <person name="Fletcher C.F."/>
            <person name="Fukushima T."/>
            <person name="Furuno M."/>
            <person name="Futaki S."/>
            <person name="Gariboldi M."/>
            <person name="Georgii-Hemming P."/>
            <person name="Gingeras T.R."/>
            <person name="Gojobori T."/>
            <person name="Green R.E."/>
            <person name="Gustincich S."/>
            <person name="Harbers M."/>
            <person name="Hayashi Y."/>
            <person name="Hensch T.K."/>
            <person name="Hirokawa N."/>
            <person name="Hill D."/>
            <person name="Huminiecki L."/>
            <person name="Iacono M."/>
            <person name="Ikeo K."/>
            <person name="Iwama A."/>
            <person name="Ishikawa T."/>
            <person name="Jakt M."/>
            <person name="Kanapin A."/>
            <person name="Katoh M."/>
            <person name="Kawasawa Y."/>
            <person name="Kelso J."/>
            <person name="Kitamura H."/>
            <person name="Kitano H."/>
            <person name="Kollias G."/>
            <person name="Krishnan S.P."/>
            <person name="Kruger A."/>
            <person name="Kummerfeld S.K."/>
            <person name="Kurochkin I.V."/>
            <person name="Lareau L.F."/>
            <person name="Lazarevic D."/>
            <person name="Lipovich L."/>
            <person name="Liu J."/>
            <person name="Liuni S."/>
            <person name="McWilliam S."/>
            <person name="Madan Babu M."/>
            <person name="Madera M."/>
            <person name="Marchionni L."/>
            <person name="Matsuda H."/>
            <person name="Matsuzawa S."/>
            <person name="Miki H."/>
            <person name="Mignone F."/>
            <person name="Miyake S."/>
            <person name="Morris K."/>
            <person name="Mottagui-Tabar S."/>
            <person name="Mulder N."/>
            <person name="Nakano N."/>
            <person name="Nakauchi H."/>
            <person name="Ng P."/>
            <person name="Nilsson R."/>
            <person name="Nishiguchi S."/>
            <person name="Nishikawa S."/>
            <person name="Nori F."/>
            <person name="Ohara O."/>
            <person name="Okazaki Y."/>
            <person name="Orlando V."/>
            <person name="Pang K.C."/>
            <person name="Pavan W.J."/>
            <person name="Pavesi G."/>
            <person name="Pesole G."/>
            <person name="Petrovsky N."/>
            <person name="Piazza S."/>
            <person name="Reed J."/>
            <person name="Reid J.F."/>
            <person name="Ring B.Z."/>
            <person name="Ringwald M."/>
            <person name="Rost B."/>
            <person name="Ruan Y."/>
            <person name="Salzberg S.L."/>
            <person name="Sandelin A."/>
            <person name="Schneider C."/>
            <person name="Schoenbach C."/>
            <person name="Sekiguchi K."/>
            <person name="Semple C.A."/>
            <person name="Seno S."/>
            <person name="Sessa L."/>
            <person name="Sheng Y."/>
            <person name="Shibata Y."/>
            <person name="Shimada H."/>
            <person name="Shimada K."/>
            <person name="Silva D."/>
            <person name="Sinclair B."/>
            <person name="Sperling S."/>
            <person name="Stupka E."/>
            <person name="Sugiura K."/>
            <person name="Sultana R."/>
            <person name="Takenaka Y."/>
            <person name="Taki K."/>
            <person name="Tammoja K."/>
            <person name="Tan S.L."/>
            <person name="Tang S."/>
            <person name="Taylor M.S."/>
            <person name="Tegner J."/>
            <person name="Teichmann S.A."/>
            <person name="Ueda H.R."/>
            <person name="van Nimwegen E."/>
            <person name="Verardo R."/>
            <person name="Wei C.L."/>
            <person name="Yagi K."/>
            <person name="Yamanishi H."/>
            <person name="Zabarovsky E."/>
            <person name="Zhu S."/>
            <person name="Zimmer A."/>
            <person name="Hide W."/>
            <person name="Bult C."/>
            <person name="Grimmond S.M."/>
            <person name="Teasdale R.D."/>
            <person name="Liu E.T."/>
            <person name="Brusic V."/>
            <person name="Quackenbush J."/>
            <person name="Wahlestedt C."/>
            <person name="Mattick J.S."/>
            <person name="Hume D.A."/>
            <person name="Kai C."/>
            <person name="Sasaki D."/>
            <person name="Tomaru Y."/>
            <person name="Fukuda S."/>
            <person name="Kanamori-Katayama M."/>
            <person name="Suzuki M."/>
            <person name="Aoki J."/>
            <person name="Arakawa T."/>
            <person name="Iida J."/>
            <person name="Imamura K."/>
            <person name="Itoh M."/>
            <person name="Kato T."/>
            <person name="Kawaji H."/>
            <person name="Kawagashira N."/>
            <person name="Kawashima T."/>
            <person name="Kojima M."/>
            <person name="Kondo S."/>
            <person name="Konno H."/>
            <person name="Nakano K."/>
            <person name="Ninomiya N."/>
            <person name="Nishio T."/>
            <person name="Okada M."/>
            <person name="Plessy C."/>
            <person name="Shibata K."/>
            <person name="Shiraki T."/>
            <person name="Suzuki S."/>
            <person name="Tagami M."/>
            <person name="Waki K."/>
            <person name="Watahiki A."/>
            <person name="Okamura-Oho Y."/>
            <person name="Suzuki H."/>
            <person name="Kawai J."/>
            <person name="Hayashizaki Y."/>
        </authorList>
    </citation>
    <scope>NUCLEOTIDE SEQUENCE [LARGE SCALE MRNA] OF 1-591</scope>
    <source>
        <strain>C57BL/6J</strain>
        <tissue>Bone</tissue>
    </source>
</reference>
<reference key="3">
    <citation type="journal article" date="2004" name="Genome Res.">
        <title>The status, quality, and expansion of the NIH full-length cDNA project: the Mammalian Gene Collection (MGC).</title>
        <authorList>
            <consortium name="The MGC Project Team"/>
        </authorList>
    </citation>
    <scope>NUCLEOTIDE SEQUENCE [LARGE SCALE MRNA] OF 374-613</scope>
    <source>
        <tissue>Salivary gland</tissue>
    </source>
</reference>
<reference key="4">
    <citation type="journal article" date="2010" name="Cell">
        <title>A tissue-specific atlas of mouse protein phosphorylation and expression.</title>
        <authorList>
            <person name="Huttlin E.L."/>
            <person name="Jedrychowski M.P."/>
            <person name="Elias J.E."/>
            <person name="Goswami T."/>
            <person name="Rad R."/>
            <person name="Beausoleil S.A."/>
            <person name="Villen J."/>
            <person name="Haas W."/>
            <person name="Sowa M.E."/>
            <person name="Gygi S.P."/>
        </authorList>
    </citation>
    <scope>PHOSPHORYLATION [LARGE SCALE ANALYSIS] AT SER-161; SER-167 AND SER-169</scope>
    <scope>IDENTIFICATION BY MASS SPECTROMETRY [LARGE SCALE ANALYSIS]</scope>
    <source>
        <tissue>Brown adipose tissue</tissue>
        <tissue>Lung</tissue>
    </source>
</reference>
<feature type="chain" id="PRO_0000086409" description="Myosin light chain kinase 2, skeletal/cardiac muscle">
    <location>
        <begin position="1"/>
        <end position="613"/>
    </location>
</feature>
<feature type="domain" description="Protein kinase" evidence="3">
    <location>
        <begin position="302"/>
        <end position="557"/>
    </location>
</feature>
<feature type="region of interest" description="Disordered" evidence="5">
    <location>
        <begin position="1"/>
        <end position="168"/>
    </location>
</feature>
<feature type="region of interest" description="Disordered" evidence="5">
    <location>
        <begin position="219"/>
        <end position="240"/>
    </location>
</feature>
<feature type="region of interest" description="Calmodulin-binding" evidence="1">
    <location>
        <begin position="591"/>
        <end position="603"/>
    </location>
</feature>
<feature type="compositionally biased region" description="Polar residues" evidence="5">
    <location>
        <begin position="1"/>
        <end position="20"/>
    </location>
</feature>
<feature type="compositionally biased region" description="Basic and acidic residues" evidence="5">
    <location>
        <begin position="32"/>
        <end position="55"/>
    </location>
</feature>
<feature type="compositionally biased region" description="Pro residues" evidence="5">
    <location>
        <begin position="56"/>
        <end position="66"/>
    </location>
</feature>
<feature type="compositionally biased region" description="Basic and acidic residues" evidence="5">
    <location>
        <begin position="67"/>
        <end position="83"/>
    </location>
</feature>
<feature type="compositionally biased region" description="Gly residues" evidence="5">
    <location>
        <begin position="95"/>
        <end position="105"/>
    </location>
</feature>
<feature type="compositionally biased region" description="Low complexity" evidence="5">
    <location>
        <begin position="106"/>
        <end position="122"/>
    </location>
</feature>
<feature type="compositionally biased region" description="Basic and acidic residues" evidence="5">
    <location>
        <begin position="145"/>
        <end position="158"/>
    </location>
</feature>
<feature type="active site" description="Proton acceptor" evidence="3 4">
    <location>
        <position position="423"/>
    </location>
</feature>
<feature type="binding site" evidence="3">
    <location>
        <begin position="308"/>
        <end position="316"/>
    </location>
    <ligand>
        <name>ATP</name>
        <dbReference type="ChEBI" id="CHEBI:30616"/>
    </ligand>
</feature>
<feature type="binding site" evidence="3">
    <location>
        <position position="331"/>
    </location>
    <ligand>
        <name>ATP</name>
        <dbReference type="ChEBI" id="CHEBI:30616"/>
    </ligand>
</feature>
<feature type="modified residue" description="Phosphoserine" evidence="7">
    <location>
        <position position="161"/>
    </location>
</feature>
<feature type="modified residue" description="Phosphoserine" evidence="7">
    <location>
        <position position="167"/>
    </location>
</feature>
<feature type="modified residue" description="Phosphoserine" evidence="7">
    <location>
        <position position="169"/>
    </location>
</feature>
<feature type="modified residue" description="Phosphothreonine" evidence="2">
    <location>
        <position position="462"/>
    </location>
</feature>
<evidence type="ECO:0000250" key="1"/>
<evidence type="ECO:0000250" key="2">
    <source>
        <dbReference type="UniProtKB" id="P20689"/>
    </source>
</evidence>
<evidence type="ECO:0000255" key="3">
    <source>
        <dbReference type="PROSITE-ProRule" id="PRU00159"/>
    </source>
</evidence>
<evidence type="ECO:0000255" key="4">
    <source>
        <dbReference type="PROSITE-ProRule" id="PRU10027"/>
    </source>
</evidence>
<evidence type="ECO:0000256" key="5">
    <source>
        <dbReference type="SAM" id="MobiDB-lite"/>
    </source>
</evidence>
<evidence type="ECO:0000305" key="6"/>
<evidence type="ECO:0007744" key="7">
    <source>
    </source>
</evidence>
<keyword id="KW-0067">ATP-binding</keyword>
<keyword id="KW-0112">Calmodulin-binding</keyword>
<keyword id="KW-0963">Cytoplasm</keyword>
<keyword id="KW-0418">Kinase</keyword>
<keyword id="KW-0547">Nucleotide-binding</keyword>
<keyword id="KW-0597">Phosphoprotein</keyword>
<keyword id="KW-1185">Reference proteome</keyword>
<keyword id="KW-0723">Serine/threonine-protein kinase</keyword>
<keyword id="KW-0808">Transferase</keyword>
<proteinExistence type="evidence at protein level"/>
<sequence length="613" mass="65990">MTTENGAVELGSQSLSTEQTPKAAAGDGPSASEKEPSAPATEKDLSPPNAKKDPGAPDPKNNPDPPSLKKDPAKAPGPEKKGDPVPASASSQGPSGEGDGGGGPAEGSEGPPAALPLPTATAEASIQKLDPTQAPSGNQGSGEAKAGKKAAECREAGRRGSPAFLHSPSCPAIISCSEKTLAVKPLSETTDLVFTGVSVTPDPQDPGPVKAGGTNALAEKKKEEAEKASGQAGQAKVQGDTPQRIGFQAVPSERVEVGQALCLTAREEDCFQILDDCPPPPAPFPHRIVELRTGNVNSEFSMNSKEALGGGKFGAVCTCTERATGLKLAAKVIKKQTPKDKEMVLLEIEVMNQLNHRNLIQLYAAIETSHEIILFMEYIEGGELFERIVDEDYHLTEVDTMVFVRQICDGILFMHKMRVLHLDLKPENILCVNTTGHLVKIIDFGLARRYNPNEKLKVNFGTPEFLSPEVVNYDQISDKTDMWSLGVITYMLLSGLSPFLGDDDTETLNNVLSANWYFDEETFEAVSDEAKDFVSNLLTKDQSARMSAEQCLAHPWLNNLAEKAKRCNRRLKSQILLKKYLMKRRWKKNFIAVSAANRFKKISSSGALMALGV</sequence>